<organism>
    <name type="scientific">Parafrankia sp. (strain EAN1pec)</name>
    <dbReference type="NCBI Taxonomy" id="298653"/>
    <lineage>
        <taxon>Bacteria</taxon>
        <taxon>Bacillati</taxon>
        <taxon>Actinomycetota</taxon>
        <taxon>Actinomycetes</taxon>
        <taxon>Frankiales</taxon>
        <taxon>Frankiaceae</taxon>
        <taxon>Parafrankia</taxon>
    </lineage>
</organism>
<feature type="chain" id="PRO_1000122319" description="Large ribosomal subunit protein bL20">
    <location>
        <begin position="1"/>
        <end position="126"/>
    </location>
</feature>
<accession>A8LE33</accession>
<sequence length="126" mass="14093">MARVKRAVNAQKKRREVLEAASGYRGQRSRLYRKAKEQMLHSMTYSYRDRRARKGDFRQLWITRINAAARANGLTYNRFVQGLRLAGVEVDRKILADLAVNDAAAFAALVEVARAALPAAAETSAA</sequence>
<name>RL20_PARS2</name>
<keyword id="KW-0687">Ribonucleoprotein</keyword>
<keyword id="KW-0689">Ribosomal protein</keyword>
<keyword id="KW-0694">RNA-binding</keyword>
<keyword id="KW-0699">rRNA-binding</keyword>
<reference key="1">
    <citation type="journal article" date="2007" name="Genome Res.">
        <title>Genome characteristics of facultatively symbiotic Frankia sp. strains reflect host range and host plant biogeography.</title>
        <authorList>
            <person name="Normand P."/>
            <person name="Lapierre P."/>
            <person name="Tisa L.S."/>
            <person name="Gogarten J.P."/>
            <person name="Alloisio N."/>
            <person name="Bagnarol E."/>
            <person name="Bassi C.A."/>
            <person name="Berry A.M."/>
            <person name="Bickhart D.M."/>
            <person name="Choisne N."/>
            <person name="Couloux A."/>
            <person name="Cournoyer B."/>
            <person name="Cruveiller S."/>
            <person name="Daubin V."/>
            <person name="Demange N."/>
            <person name="Francino M.P."/>
            <person name="Goltsman E."/>
            <person name="Huang Y."/>
            <person name="Kopp O.R."/>
            <person name="Labarre L."/>
            <person name="Lapidus A."/>
            <person name="Lavire C."/>
            <person name="Marechal J."/>
            <person name="Martinez M."/>
            <person name="Mastronunzio J.E."/>
            <person name="Mullin B.C."/>
            <person name="Niemann J."/>
            <person name="Pujic P."/>
            <person name="Rawnsley T."/>
            <person name="Rouy Z."/>
            <person name="Schenowitz C."/>
            <person name="Sellstedt A."/>
            <person name="Tavares F."/>
            <person name="Tomkins J.P."/>
            <person name="Vallenet D."/>
            <person name="Valverde C."/>
            <person name="Wall L.G."/>
            <person name="Wang Y."/>
            <person name="Medigue C."/>
            <person name="Benson D.R."/>
        </authorList>
    </citation>
    <scope>NUCLEOTIDE SEQUENCE [LARGE SCALE GENOMIC DNA]</scope>
    <source>
        <strain>EAN1pec</strain>
    </source>
</reference>
<comment type="function">
    <text evidence="1">Binds directly to 23S ribosomal RNA and is necessary for the in vitro assembly process of the 50S ribosomal subunit. It is not involved in the protein synthesizing functions of that subunit.</text>
</comment>
<comment type="similarity">
    <text evidence="1">Belongs to the bacterial ribosomal protein bL20 family.</text>
</comment>
<proteinExistence type="inferred from homology"/>
<evidence type="ECO:0000255" key="1">
    <source>
        <dbReference type="HAMAP-Rule" id="MF_00382"/>
    </source>
</evidence>
<evidence type="ECO:0000305" key="2"/>
<dbReference type="EMBL" id="CP000820">
    <property type="protein sequence ID" value="ABW11168.1"/>
    <property type="molecule type" value="Genomic_DNA"/>
</dbReference>
<dbReference type="RefSeq" id="WP_020459340.1">
    <property type="nucleotide sequence ID" value="NC_009921.1"/>
</dbReference>
<dbReference type="SMR" id="A8LE33"/>
<dbReference type="STRING" id="298653.Franean1_1730"/>
<dbReference type="KEGG" id="fre:Franean1_1730"/>
<dbReference type="eggNOG" id="COG0292">
    <property type="taxonomic scope" value="Bacteria"/>
</dbReference>
<dbReference type="HOGENOM" id="CLU_123265_0_0_11"/>
<dbReference type="GO" id="GO:1990904">
    <property type="term" value="C:ribonucleoprotein complex"/>
    <property type="evidence" value="ECO:0007669"/>
    <property type="project" value="UniProtKB-KW"/>
</dbReference>
<dbReference type="GO" id="GO:0005840">
    <property type="term" value="C:ribosome"/>
    <property type="evidence" value="ECO:0007669"/>
    <property type="project" value="UniProtKB-KW"/>
</dbReference>
<dbReference type="GO" id="GO:0019843">
    <property type="term" value="F:rRNA binding"/>
    <property type="evidence" value="ECO:0007669"/>
    <property type="project" value="UniProtKB-UniRule"/>
</dbReference>
<dbReference type="GO" id="GO:0003735">
    <property type="term" value="F:structural constituent of ribosome"/>
    <property type="evidence" value="ECO:0007669"/>
    <property type="project" value="InterPro"/>
</dbReference>
<dbReference type="GO" id="GO:0000027">
    <property type="term" value="P:ribosomal large subunit assembly"/>
    <property type="evidence" value="ECO:0007669"/>
    <property type="project" value="UniProtKB-UniRule"/>
</dbReference>
<dbReference type="GO" id="GO:0006412">
    <property type="term" value="P:translation"/>
    <property type="evidence" value="ECO:0007669"/>
    <property type="project" value="InterPro"/>
</dbReference>
<dbReference type="CDD" id="cd07026">
    <property type="entry name" value="Ribosomal_L20"/>
    <property type="match status" value="1"/>
</dbReference>
<dbReference type="FunFam" id="1.10.1900.20:FF:000001">
    <property type="entry name" value="50S ribosomal protein L20"/>
    <property type="match status" value="1"/>
</dbReference>
<dbReference type="Gene3D" id="6.10.160.10">
    <property type="match status" value="1"/>
</dbReference>
<dbReference type="Gene3D" id="1.10.1900.20">
    <property type="entry name" value="Ribosomal protein L20"/>
    <property type="match status" value="1"/>
</dbReference>
<dbReference type="HAMAP" id="MF_00382">
    <property type="entry name" value="Ribosomal_bL20"/>
    <property type="match status" value="1"/>
</dbReference>
<dbReference type="InterPro" id="IPR005813">
    <property type="entry name" value="Ribosomal_bL20"/>
</dbReference>
<dbReference type="InterPro" id="IPR049946">
    <property type="entry name" value="RIBOSOMAL_L20_CS"/>
</dbReference>
<dbReference type="InterPro" id="IPR035566">
    <property type="entry name" value="Ribosomal_protein_bL20_C"/>
</dbReference>
<dbReference type="NCBIfam" id="TIGR01032">
    <property type="entry name" value="rplT_bact"/>
    <property type="match status" value="1"/>
</dbReference>
<dbReference type="PANTHER" id="PTHR10986">
    <property type="entry name" value="39S RIBOSOMAL PROTEIN L20"/>
    <property type="match status" value="1"/>
</dbReference>
<dbReference type="Pfam" id="PF00453">
    <property type="entry name" value="Ribosomal_L20"/>
    <property type="match status" value="1"/>
</dbReference>
<dbReference type="PRINTS" id="PR00062">
    <property type="entry name" value="RIBOSOMALL20"/>
</dbReference>
<dbReference type="SUPFAM" id="SSF74731">
    <property type="entry name" value="Ribosomal protein L20"/>
    <property type="match status" value="1"/>
</dbReference>
<dbReference type="PROSITE" id="PS00937">
    <property type="entry name" value="RIBOSOMAL_L20"/>
    <property type="match status" value="1"/>
</dbReference>
<gene>
    <name evidence="1" type="primary">rplT</name>
    <name type="ordered locus">Franean1_1730</name>
</gene>
<protein>
    <recommendedName>
        <fullName evidence="1">Large ribosomal subunit protein bL20</fullName>
    </recommendedName>
    <alternativeName>
        <fullName evidence="2">50S ribosomal protein L20</fullName>
    </alternativeName>
</protein>